<proteinExistence type="inferred from homology"/>
<comment type="function">
    <text evidence="1">Involved in iron-sulfur (Fe-S) cluster assembly. May act as a regulator of Fe-S biogenesis.</text>
</comment>
<comment type="similarity">
    <text evidence="1">Belongs to the frataxin family.</text>
</comment>
<protein>
    <recommendedName>
        <fullName evidence="1">Iron-sulfur cluster assembly protein CyaY</fullName>
    </recommendedName>
</protein>
<keyword id="KW-0408">Iron</keyword>
<keyword id="KW-0479">Metal-binding</keyword>
<organism>
    <name type="scientific">Vibrio cholerae serotype O1 (strain ATCC 39541 / Classical Ogawa 395 / O395)</name>
    <dbReference type="NCBI Taxonomy" id="345073"/>
    <lineage>
        <taxon>Bacteria</taxon>
        <taxon>Pseudomonadati</taxon>
        <taxon>Pseudomonadota</taxon>
        <taxon>Gammaproteobacteria</taxon>
        <taxon>Vibrionales</taxon>
        <taxon>Vibrionaceae</taxon>
        <taxon>Vibrio</taxon>
    </lineage>
</organism>
<evidence type="ECO:0000255" key="1">
    <source>
        <dbReference type="HAMAP-Rule" id="MF_00142"/>
    </source>
</evidence>
<feature type="chain" id="PRO_1000071463" description="Iron-sulfur cluster assembly protein CyaY">
    <location>
        <begin position="1"/>
        <end position="104"/>
    </location>
</feature>
<accession>A5F4I9</accession>
<accession>C3M2C1</accession>
<sequence>MNETEFHQLVDSQLERIEAAIDEAGADIDYETSGNVMTLEFDDGSQIIINRQEPMREIWLASKSGGYHFKSIDGEWICSKTGLELLTLLKQECDKHADEPIDWV</sequence>
<gene>
    <name evidence="1" type="primary">cyaY</name>
    <name type="ordered locus">VC0395_A2396</name>
    <name type="ordered locus">VC395_0057</name>
</gene>
<dbReference type="EMBL" id="CP000627">
    <property type="protein sequence ID" value="ABQ20522.1"/>
    <property type="molecule type" value="Genomic_DNA"/>
</dbReference>
<dbReference type="EMBL" id="CP001235">
    <property type="protein sequence ID" value="ACP08085.1"/>
    <property type="molecule type" value="Genomic_DNA"/>
</dbReference>
<dbReference type="RefSeq" id="WP_001005953.1">
    <property type="nucleotide sequence ID" value="NZ_JAACZH010000014.1"/>
</dbReference>
<dbReference type="SMR" id="A5F4I9"/>
<dbReference type="GeneID" id="89513210"/>
<dbReference type="KEGG" id="vco:VC0395_A2396"/>
<dbReference type="KEGG" id="vcr:VC395_0057"/>
<dbReference type="PATRIC" id="fig|345073.21.peg.55"/>
<dbReference type="eggNOG" id="COG1965">
    <property type="taxonomic scope" value="Bacteria"/>
</dbReference>
<dbReference type="HOGENOM" id="CLU_080880_3_0_6"/>
<dbReference type="OrthoDB" id="285675at2"/>
<dbReference type="Proteomes" id="UP000000249">
    <property type="component" value="Chromosome 2"/>
</dbReference>
<dbReference type="GO" id="GO:0005829">
    <property type="term" value="C:cytosol"/>
    <property type="evidence" value="ECO:0007669"/>
    <property type="project" value="TreeGrafter"/>
</dbReference>
<dbReference type="GO" id="GO:0008199">
    <property type="term" value="F:ferric iron binding"/>
    <property type="evidence" value="ECO:0007669"/>
    <property type="project" value="InterPro"/>
</dbReference>
<dbReference type="GO" id="GO:0008198">
    <property type="term" value="F:ferrous iron binding"/>
    <property type="evidence" value="ECO:0007669"/>
    <property type="project" value="TreeGrafter"/>
</dbReference>
<dbReference type="GO" id="GO:0016226">
    <property type="term" value="P:iron-sulfur cluster assembly"/>
    <property type="evidence" value="ECO:0007669"/>
    <property type="project" value="UniProtKB-UniRule"/>
</dbReference>
<dbReference type="CDD" id="cd00503">
    <property type="entry name" value="Frataxin"/>
    <property type="match status" value="1"/>
</dbReference>
<dbReference type="FunFam" id="3.30.920.10:FF:000007">
    <property type="entry name" value="Iron-sulfur cluster assembly protein CyaY"/>
    <property type="match status" value="1"/>
</dbReference>
<dbReference type="Gene3D" id="3.30.920.10">
    <property type="entry name" value="Frataxin/CyaY"/>
    <property type="match status" value="1"/>
</dbReference>
<dbReference type="HAMAP" id="MF_00142">
    <property type="entry name" value="CyaY"/>
    <property type="match status" value="1"/>
</dbReference>
<dbReference type="InterPro" id="IPR047584">
    <property type="entry name" value="CyaY"/>
</dbReference>
<dbReference type="InterPro" id="IPR002908">
    <property type="entry name" value="Frataxin/CyaY"/>
</dbReference>
<dbReference type="InterPro" id="IPR036524">
    <property type="entry name" value="Frataxin/CyaY_sf"/>
</dbReference>
<dbReference type="InterPro" id="IPR020895">
    <property type="entry name" value="Frataxin_CS"/>
</dbReference>
<dbReference type="NCBIfam" id="TIGR03421">
    <property type="entry name" value="FeS_CyaY"/>
    <property type="match status" value="1"/>
</dbReference>
<dbReference type="PANTHER" id="PTHR16821">
    <property type="entry name" value="FRATAXIN"/>
    <property type="match status" value="1"/>
</dbReference>
<dbReference type="PANTHER" id="PTHR16821:SF2">
    <property type="entry name" value="FRATAXIN, MITOCHONDRIAL"/>
    <property type="match status" value="1"/>
</dbReference>
<dbReference type="Pfam" id="PF01491">
    <property type="entry name" value="Frataxin_Cyay"/>
    <property type="match status" value="1"/>
</dbReference>
<dbReference type="SMART" id="SM01219">
    <property type="entry name" value="Frataxin_Cyay"/>
    <property type="match status" value="1"/>
</dbReference>
<dbReference type="SUPFAM" id="SSF55387">
    <property type="entry name" value="Frataxin/Nqo15-like"/>
    <property type="match status" value="1"/>
</dbReference>
<dbReference type="PROSITE" id="PS01344">
    <property type="entry name" value="FRATAXIN_1"/>
    <property type="match status" value="1"/>
</dbReference>
<dbReference type="PROSITE" id="PS50810">
    <property type="entry name" value="FRATAXIN_2"/>
    <property type="match status" value="1"/>
</dbReference>
<name>CYAY_VIBC3</name>
<reference key="1">
    <citation type="submission" date="2007-03" db="EMBL/GenBank/DDBJ databases">
        <authorList>
            <person name="Heidelberg J."/>
        </authorList>
    </citation>
    <scope>NUCLEOTIDE SEQUENCE [LARGE SCALE GENOMIC DNA]</scope>
    <source>
        <strain>ATCC 39541 / Classical Ogawa 395 / O395</strain>
    </source>
</reference>
<reference key="2">
    <citation type="journal article" date="2008" name="PLoS ONE">
        <title>A recalibrated molecular clock and independent origins for the cholera pandemic clones.</title>
        <authorList>
            <person name="Feng L."/>
            <person name="Reeves P.R."/>
            <person name="Lan R."/>
            <person name="Ren Y."/>
            <person name="Gao C."/>
            <person name="Zhou Z."/>
            <person name="Ren Y."/>
            <person name="Cheng J."/>
            <person name="Wang W."/>
            <person name="Wang J."/>
            <person name="Qian W."/>
            <person name="Li D."/>
            <person name="Wang L."/>
        </authorList>
    </citation>
    <scope>NUCLEOTIDE SEQUENCE [LARGE SCALE GENOMIC DNA]</scope>
    <source>
        <strain>ATCC 39541 / Classical Ogawa 395 / O395</strain>
    </source>
</reference>